<protein>
    <recommendedName>
        <fullName>Serine/arginine repetitive matrix protein 2</fullName>
    </recommendedName>
</protein>
<proteinExistence type="evidence at protein level"/>
<feature type="chain" id="PRO_0000248155" description="Serine/arginine repetitive matrix protein 2">
    <location>
        <begin position="1"/>
        <end position="2703"/>
    </location>
</feature>
<feature type="region of interest" description="Disordered" evidence="4">
    <location>
        <begin position="141"/>
        <end position="1007"/>
    </location>
</feature>
<feature type="region of interest" description="Sufficient for RNA-binding" evidence="1">
    <location>
        <begin position="197"/>
        <end position="259"/>
    </location>
</feature>
<feature type="region of interest" description="Disordered" evidence="4">
    <location>
        <begin position="1024"/>
        <end position="1112"/>
    </location>
</feature>
<feature type="region of interest" description="Disordered" evidence="4">
    <location>
        <begin position="1136"/>
        <end position="2092"/>
    </location>
</feature>
<feature type="region of interest" description="Disordered" evidence="4">
    <location>
        <begin position="2263"/>
        <end position="2703"/>
    </location>
</feature>
<feature type="coiled-coil region" evidence="3">
    <location>
        <begin position="60"/>
        <end position="92"/>
    </location>
</feature>
<feature type="compositionally biased region" description="Basic residues" evidence="4">
    <location>
        <begin position="186"/>
        <end position="197"/>
    </location>
</feature>
<feature type="compositionally biased region" description="Basic residues" evidence="4">
    <location>
        <begin position="207"/>
        <end position="249"/>
    </location>
</feature>
<feature type="compositionally biased region" description="Low complexity" evidence="4">
    <location>
        <begin position="263"/>
        <end position="284"/>
    </location>
</feature>
<feature type="compositionally biased region" description="Low complexity" evidence="4">
    <location>
        <begin position="319"/>
        <end position="334"/>
    </location>
</feature>
<feature type="compositionally biased region" description="Basic and acidic residues" evidence="4">
    <location>
        <begin position="335"/>
        <end position="345"/>
    </location>
</feature>
<feature type="compositionally biased region" description="Polar residues" evidence="4">
    <location>
        <begin position="383"/>
        <end position="396"/>
    </location>
</feature>
<feature type="compositionally biased region" description="Polar residues" evidence="4">
    <location>
        <begin position="425"/>
        <end position="437"/>
    </location>
</feature>
<feature type="compositionally biased region" description="Basic residues" evidence="4">
    <location>
        <begin position="459"/>
        <end position="533"/>
    </location>
</feature>
<feature type="compositionally biased region" description="Low complexity" evidence="4">
    <location>
        <begin position="534"/>
        <end position="543"/>
    </location>
</feature>
<feature type="compositionally biased region" description="Basic residues" evidence="4">
    <location>
        <begin position="544"/>
        <end position="561"/>
    </location>
</feature>
<feature type="compositionally biased region" description="Basic residues" evidence="4">
    <location>
        <begin position="568"/>
        <end position="721"/>
    </location>
</feature>
<feature type="compositionally biased region" description="Basic residues" evidence="4">
    <location>
        <begin position="730"/>
        <end position="740"/>
    </location>
</feature>
<feature type="compositionally biased region" description="Low complexity" evidence="4">
    <location>
        <begin position="785"/>
        <end position="817"/>
    </location>
</feature>
<feature type="compositionally biased region" description="Polar residues" evidence="4">
    <location>
        <begin position="829"/>
        <end position="851"/>
    </location>
</feature>
<feature type="compositionally biased region" description="Polar residues" evidence="4">
    <location>
        <begin position="859"/>
        <end position="874"/>
    </location>
</feature>
<feature type="compositionally biased region" description="Low complexity" evidence="4">
    <location>
        <begin position="875"/>
        <end position="891"/>
    </location>
</feature>
<feature type="compositionally biased region" description="Low complexity" evidence="4">
    <location>
        <begin position="898"/>
        <end position="919"/>
    </location>
</feature>
<feature type="compositionally biased region" description="Polar residues" evidence="4">
    <location>
        <begin position="960"/>
        <end position="1000"/>
    </location>
</feature>
<feature type="compositionally biased region" description="Polar residues" evidence="4">
    <location>
        <begin position="1024"/>
        <end position="1057"/>
    </location>
</feature>
<feature type="compositionally biased region" description="Low complexity" evidence="4">
    <location>
        <begin position="1058"/>
        <end position="1068"/>
    </location>
</feature>
<feature type="compositionally biased region" description="Basic and acidic residues" evidence="4">
    <location>
        <begin position="1079"/>
        <end position="1092"/>
    </location>
</feature>
<feature type="compositionally biased region" description="Basic and acidic residues" evidence="4">
    <location>
        <begin position="1146"/>
        <end position="1158"/>
    </location>
</feature>
<feature type="compositionally biased region" description="Basic and acidic residues" evidence="4">
    <location>
        <begin position="1270"/>
        <end position="1284"/>
    </location>
</feature>
<feature type="compositionally biased region" description="Polar residues" evidence="4">
    <location>
        <begin position="1285"/>
        <end position="1304"/>
    </location>
</feature>
<feature type="compositionally biased region" description="Basic and acidic residues" evidence="4">
    <location>
        <begin position="1371"/>
        <end position="1387"/>
    </location>
</feature>
<feature type="compositionally biased region" description="Low complexity" evidence="4">
    <location>
        <begin position="1397"/>
        <end position="1408"/>
    </location>
</feature>
<feature type="compositionally biased region" description="Polar residues" evidence="4">
    <location>
        <begin position="1409"/>
        <end position="1431"/>
    </location>
</feature>
<feature type="compositionally biased region" description="Polar residues" evidence="4">
    <location>
        <begin position="1454"/>
        <end position="1468"/>
    </location>
</feature>
<feature type="compositionally biased region" description="Polar residues" evidence="4">
    <location>
        <begin position="1475"/>
        <end position="1489"/>
    </location>
</feature>
<feature type="compositionally biased region" description="Low complexity" evidence="4">
    <location>
        <begin position="1490"/>
        <end position="1499"/>
    </location>
</feature>
<feature type="compositionally biased region" description="Basic and acidic residues" evidence="4">
    <location>
        <begin position="1511"/>
        <end position="1523"/>
    </location>
</feature>
<feature type="compositionally biased region" description="Basic residues" evidence="4">
    <location>
        <begin position="1524"/>
        <end position="1533"/>
    </location>
</feature>
<feature type="compositionally biased region" description="Low complexity" evidence="4">
    <location>
        <begin position="1604"/>
        <end position="1613"/>
    </location>
</feature>
<feature type="compositionally biased region" description="Basic residues" evidence="4">
    <location>
        <begin position="1637"/>
        <end position="1647"/>
    </location>
</feature>
<feature type="compositionally biased region" description="Basic residues" evidence="4">
    <location>
        <begin position="1725"/>
        <end position="1745"/>
    </location>
</feature>
<feature type="compositionally biased region" description="Basic residues" evidence="4">
    <location>
        <begin position="1754"/>
        <end position="1772"/>
    </location>
</feature>
<feature type="compositionally biased region" description="Low complexity" evidence="4">
    <location>
        <begin position="1776"/>
        <end position="1789"/>
    </location>
</feature>
<feature type="compositionally biased region" description="Basic residues" evidence="4">
    <location>
        <begin position="1790"/>
        <end position="1810"/>
    </location>
</feature>
<feature type="compositionally biased region" description="Basic residues" evidence="4">
    <location>
        <begin position="1818"/>
        <end position="2020"/>
    </location>
</feature>
<feature type="compositionally biased region" description="Low complexity" evidence="4">
    <location>
        <begin position="2022"/>
        <end position="2047"/>
    </location>
</feature>
<feature type="compositionally biased region" description="Low complexity" evidence="4">
    <location>
        <begin position="2062"/>
        <end position="2076"/>
    </location>
</feature>
<feature type="compositionally biased region" description="Polar residues" evidence="4">
    <location>
        <begin position="2269"/>
        <end position="2283"/>
    </location>
</feature>
<feature type="compositionally biased region" description="Polar residues" evidence="4">
    <location>
        <begin position="2410"/>
        <end position="2443"/>
    </location>
</feature>
<feature type="compositionally biased region" description="Polar residues" evidence="4">
    <location>
        <begin position="2467"/>
        <end position="2476"/>
    </location>
</feature>
<feature type="compositionally biased region" description="Low complexity" evidence="4">
    <location>
        <begin position="2487"/>
        <end position="2521"/>
    </location>
</feature>
<feature type="compositionally biased region" description="Low complexity" evidence="4">
    <location>
        <begin position="2562"/>
        <end position="2602"/>
    </location>
</feature>
<feature type="compositionally biased region" description="Pro residues" evidence="4">
    <location>
        <begin position="2605"/>
        <end position="2622"/>
    </location>
</feature>
<feature type="compositionally biased region" description="Basic and acidic residues" evidence="4">
    <location>
        <begin position="2623"/>
        <end position="2643"/>
    </location>
</feature>
<feature type="compositionally biased region" description="Basic residues" evidence="4">
    <location>
        <begin position="2694"/>
        <end position="2703"/>
    </location>
</feature>
<feature type="modified residue" description="N-acetylmethionine" evidence="2">
    <location>
        <position position="1"/>
    </location>
</feature>
<feature type="modified residue" description="N6-acetyllysine" evidence="14">
    <location>
        <position position="101"/>
    </location>
</feature>
<feature type="modified residue" description="Phosphotyrosine" evidence="2">
    <location>
        <position position="145"/>
    </location>
</feature>
<feature type="modified residue" description="N6-acetyllysine" evidence="2">
    <location>
        <position position="169"/>
    </location>
</feature>
<feature type="modified residue" description="Phosphoserine" evidence="2">
    <location>
        <position position="220"/>
    </location>
</feature>
<feature type="modified residue" description="Phosphoserine" evidence="2">
    <location>
        <position position="222"/>
    </location>
</feature>
<feature type="modified residue" description="Phosphoserine" evidence="13">
    <location>
        <position position="295"/>
    </location>
</feature>
<feature type="modified residue" description="Phosphoserine" evidence="2">
    <location>
        <position position="300"/>
    </location>
</feature>
<feature type="modified residue" description="Phosphoserine" evidence="13">
    <location>
        <position position="310"/>
    </location>
</feature>
<feature type="modified residue" description="Phosphoserine" evidence="2">
    <location>
        <position position="322"/>
    </location>
</feature>
<feature type="modified residue" description="Phosphoserine" evidence="9 13">
    <location>
        <position position="323"/>
    </location>
</feature>
<feature type="modified residue" description="Phosphoserine" evidence="9 10 13">
    <location>
        <position position="349"/>
    </location>
</feature>
<feature type="modified residue" description="Phosphoserine" evidence="9 10 13">
    <location>
        <position position="351"/>
    </location>
</feature>
<feature type="modified residue" description="Phosphoserine" evidence="2">
    <location>
        <position position="355"/>
    </location>
</feature>
<feature type="modified residue" description="Phosphoserine" evidence="2">
    <location>
        <position position="356"/>
    </location>
</feature>
<feature type="modified residue" description="Phosphothreonine" evidence="2">
    <location>
        <position position="357"/>
    </location>
</feature>
<feature type="modified residue" description="Phosphothreonine" evidence="2">
    <location>
        <position position="365"/>
    </location>
</feature>
<feature type="modified residue" description="Phosphoserine" evidence="2">
    <location>
        <position position="375"/>
    </location>
</feature>
<feature type="modified residue" description="Phosphoserine" evidence="2">
    <location>
        <position position="385"/>
    </location>
</feature>
<feature type="modified residue" description="Phosphoserine" evidence="2">
    <location>
        <position position="393"/>
    </location>
</feature>
<feature type="modified residue" description="Phosphoserine" evidence="2">
    <location>
        <position position="396"/>
    </location>
</feature>
<feature type="modified residue" description="Phosphoserine" evidence="9 13">
    <location>
        <position position="402"/>
    </location>
</feature>
<feature type="modified residue" description="Phosphoserine" evidence="9 13">
    <location>
        <position position="406"/>
    </location>
</feature>
<feature type="modified residue" description="Phosphoserine" evidence="13">
    <location>
        <position position="422"/>
    </location>
</feature>
<feature type="modified residue" description="Phosphoserine" evidence="9 10 11 12 13">
    <location>
        <position position="433"/>
    </location>
</feature>
<feature type="modified residue" description="Phosphoserine" evidence="9 10 11 12 13">
    <location>
        <position position="434"/>
    </location>
</feature>
<feature type="modified residue" description="Phosphoserine" evidence="9 10 11 12 13">
    <location>
        <position position="435"/>
    </location>
</feature>
<feature type="modified residue" description="Phosphoserine" evidence="13">
    <location>
        <position position="438"/>
    </location>
</feature>
<feature type="modified residue" description="Phosphoserine" evidence="2">
    <location>
        <position position="452"/>
    </location>
</feature>
<feature type="modified residue" description="Phosphoserine" evidence="2">
    <location>
        <position position="482"/>
    </location>
</feature>
<feature type="modified residue" description="Phosphoserine" evidence="2">
    <location>
        <position position="484"/>
    </location>
</feature>
<feature type="modified residue" description="Phosphoserine" evidence="2">
    <location>
        <position position="503"/>
    </location>
</feature>
<feature type="modified residue" description="Phosphoserine" evidence="2">
    <location>
        <position position="505"/>
    </location>
</feature>
<feature type="modified residue" description="Phosphoserine" evidence="2">
    <location>
        <position position="507"/>
    </location>
</feature>
<feature type="modified residue" description="Phosphoserine" evidence="11">
    <location>
        <position position="531"/>
    </location>
</feature>
<feature type="modified residue" description="Phosphoserine" evidence="11">
    <location>
        <position position="533"/>
    </location>
</feature>
<feature type="modified residue" description="Phosphoserine" evidence="2">
    <location>
        <position position="540"/>
    </location>
</feature>
<feature type="modified residue" description="Phosphoserine" evidence="2">
    <location>
        <position position="700"/>
    </location>
</feature>
<feature type="modified residue" description="Phosphoserine" evidence="2">
    <location>
        <position position="702"/>
    </location>
</feature>
<feature type="modified residue" description="Phosphoserine" evidence="2">
    <location>
        <position position="704"/>
    </location>
</feature>
<feature type="modified residue" description="Phosphoserine" evidence="10 13">
    <location>
        <position position="773"/>
    </location>
</feature>
<feature type="modified residue" description="Phosphoserine" evidence="10">
    <location>
        <position position="775"/>
    </location>
</feature>
<feature type="modified residue" description="Phosphoserine" evidence="10 13">
    <location>
        <position position="778"/>
    </location>
</feature>
<feature type="modified residue" description="Phosphoserine" evidence="2">
    <location>
        <position position="821"/>
    </location>
</feature>
<feature type="modified residue" description="Phosphoserine" evidence="13">
    <location>
        <position position="829"/>
    </location>
</feature>
<feature type="modified residue" description="Phosphothreonine" evidence="13">
    <location>
        <position position="831"/>
    </location>
</feature>
<feature type="modified residue" description="Phosphothreonine" evidence="9 13">
    <location>
        <position position="841"/>
    </location>
</feature>
<feature type="modified residue" description="Phosphoserine" evidence="2">
    <location>
        <position position="846"/>
    </location>
</feature>
<feature type="modified residue" description="Phosphoserine" evidence="2">
    <location>
        <position position="850"/>
    </location>
</feature>
<feature type="modified residue" description="Phosphoserine" evidence="2">
    <location>
        <position position="851"/>
    </location>
</feature>
<feature type="modified residue" description="Phosphoserine" evidence="13">
    <location>
        <position position="882"/>
    </location>
</feature>
<feature type="modified residue" description="Phosphoserine" evidence="2">
    <location>
        <position position="909"/>
    </location>
</feature>
<feature type="modified residue" description="Phosphoserine" evidence="2">
    <location>
        <position position="924"/>
    </location>
</feature>
<feature type="modified residue" description="Phosphoserine" evidence="2">
    <location>
        <position position="926"/>
    </location>
</feature>
<feature type="modified residue" description="Phosphoserine" evidence="2">
    <location>
        <position position="928"/>
    </location>
</feature>
<feature type="modified residue" description="Phosphoserine" evidence="2">
    <location>
        <position position="940"/>
    </location>
</feature>
<feature type="modified residue" description="Phosphoserine" evidence="2">
    <location>
        <position position="942"/>
    </location>
</feature>
<feature type="modified residue" description="Phosphoserine" evidence="2">
    <location>
        <position position="944"/>
    </location>
</feature>
<feature type="modified residue" description="Phosphoserine" evidence="2">
    <location>
        <position position="945"/>
    </location>
</feature>
<feature type="modified residue" description="Phosphoserine" evidence="13">
    <location>
        <position position="946"/>
    </location>
</feature>
<feature type="modified residue" description="Phosphoserine" evidence="13">
    <location>
        <position position="949"/>
    </location>
</feature>
<feature type="modified residue" description="Phosphothreonine" evidence="9 13">
    <location>
        <position position="955"/>
    </location>
</feature>
<feature type="modified residue" description="Phosphoserine" evidence="2">
    <location>
        <position position="962"/>
    </location>
</feature>
<feature type="modified residue" description="Phosphoserine" evidence="2">
    <location>
        <position position="964"/>
    </location>
</feature>
<feature type="modified residue" description="Phosphotyrosine" evidence="2">
    <location>
        <position position="966"/>
    </location>
</feature>
<feature type="modified residue" description="Phosphothreonine" evidence="12 13">
    <location>
        <position position="973"/>
    </location>
</feature>
<feature type="modified residue" description="Phosphoserine" evidence="2">
    <location>
        <position position="980"/>
    </location>
</feature>
<feature type="modified residue" description="Phosphoserine" evidence="13">
    <location>
        <position position="984"/>
    </location>
</feature>
<feature type="modified residue" description="Phosphoserine" evidence="13">
    <location>
        <position position="993"/>
    </location>
</feature>
<feature type="modified residue" description="Phosphothreonine" evidence="13">
    <location>
        <position position="995"/>
    </location>
</feature>
<feature type="modified residue" description="Phosphoserine" evidence="2">
    <location>
        <position position="997"/>
    </location>
</feature>
<feature type="modified residue" description="Phosphoserine" evidence="2">
    <location>
        <position position="1000"/>
    </location>
</feature>
<feature type="modified residue" description="Phosphoserine" evidence="13">
    <location>
        <position position="1011"/>
    </location>
</feature>
<feature type="modified residue" description="Phosphoserine" evidence="2">
    <location>
        <position position="1037"/>
    </location>
</feature>
<feature type="modified residue" description="Phosphoserine" evidence="13">
    <location>
        <position position="1038"/>
    </location>
</feature>
<feature type="modified residue" description="Phosphothreonine" evidence="13">
    <location>
        <position position="1044"/>
    </location>
</feature>
<feature type="modified residue" description="Phosphoserine" evidence="9 13">
    <location>
        <position position="1048"/>
    </location>
</feature>
<feature type="modified residue" description="Phosphoserine" evidence="2">
    <location>
        <position position="1064"/>
    </location>
</feature>
<feature type="modified residue" description="Phosphoserine" evidence="2">
    <location>
        <position position="1066"/>
    </location>
</feature>
<feature type="modified residue" description="Phosphoserine" evidence="13">
    <location>
        <position position="1067"/>
    </location>
</feature>
<feature type="modified residue" description="Phosphoserine" evidence="9 13">
    <location>
        <position position="1068"/>
    </location>
</feature>
<feature type="modified residue" description="Phosphothreonine" evidence="13">
    <location>
        <position position="1071"/>
    </location>
</feature>
<feature type="modified residue" description="Phosphoserine" evidence="9 13">
    <location>
        <position position="1077"/>
    </location>
</feature>
<feature type="modified residue" description="Phosphoserine" evidence="2">
    <location>
        <position position="1087"/>
    </location>
</feature>
<feature type="modified residue" description="Phosphoserine" evidence="2">
    <location>
        <position position="1094"/>
    </location>
</feature>
<feature type="modified residue" description="Phosphoserine" evidence="13">
    <location>
        <position position="1097"/>
    </location>
</feature>
<feature type="modified residue" description="Phosphoserine" evidence="2">
    <location>
        <position position="1117"/>
    </location>
</feature>
<feature type="modified residue" description="Phosphoserine" evidence="11">
    <location>
        <position position="1151"/>
    </location>
</feature>
<feature type="modified residue" description="Phosphoserine" evidence="2">
    <location>
        <position position="1159"/>
    </location>
</feature>
<feature type="modified residue" description="Phosphoserine" evidence="2">
    <location>
        <position position="1175"/>
    </location>
</feature>
<feature type="modified residue" description="Phosphoserine" evidence="2">
    <location>
        <position position="1188"/>
    </location>
</feature>
<feature type="modified residue" description="Phosphoserine" evidence="9 10 13">
    <location>
        <position position="1216"/>
    </location>
</feature>
<feature type="modified residue" description="Phosphoserine" evidence="13">
    <location>
        <position position="1225"/>
    </location>
</feature>
<feature type="modified residue" description="Phosphoserine" evidence="13">
    <location>
        <position position="1229"/>
    </location>
</feature>
<feature type="modified residue" description="Phosphoserine" evidence="13">
    <location>
        <position position="1230"/>
    </location>
</feature>
<feature type="modified residue" description="Phosphoserine" evidence="9 13">
    <location>
        <position position="1269"/>
    </location>
</feature>
<feature type="modified residue" description="Phosphoserine" evidence="2">
    <location>
        <position position="1276"/>
    </location>
</feature>
<feature type="modified residue" description="Phosphoserine" evidence="2">
    <location>
        <position position="1278"/>
    </location>
</feature>
<feature type="modified residue" description="Phosphoserine" evidence="2">
    <location>
        <position position="1284"/>
    </location>
</feature>
<feature type="modified residue" description="Phosphoserine" evidence="2">
    <location>
        <position position="1287"/>
    </location>
</feature>
<feature type="modified residue" description="Phosphoserine" evidence="2">
    <location>
        <position position="1294"/>
    </location>
</feature>
<feature type="modified residue" description="Phosphoserine" evidence="9 10 12 13">
    <location>
        <position position="1305"/>
    </location>
</feature>
<feature type="modified residue" description="Phosphoserine" evidence="2">
    <location>
        <position position="1325"/>
    </location>
</feature>
<feature type="modified residue" description="Phosphoserine" evidence="9 11 12 13">
    <location>
        <position position="1338"/>
    </location>
</feature>
<feature type="modified residue" description="Phosphoserine" evidence="9 11 12 13">
    <location>
        <position position="1339"/>
    </location>
</feature>
<feature type="modified residue" description="Phosphoserine" evidence="13">
    <location>
        <position position="1340"/>
    </location>
</feature>
<feature type="modified residue" description="Phosphoserine" evidence="8 9 11 12 13">
    <location>
        <position position="1343"/>
    </location>
</feature>
<feature type="modified residue" description="Phosphoserine" evidence="2">
    <location>
        <position position="1359"/>
    </location>
</feature>
<feature type="modified residue" description="Phosphoserine" evidence="11 12 13">
    <location>
        <position position="1360"/>
    </location>
</feature>
<feature type="modified residue" description="Phosphothreonine" evidence="2">
    <location>
        <position position="1370"/>
    </location>
</feature>
<feature type="modified residue" description="Phosphoserine" evidence="2">
    <location>
        <position position="1372"/>
    </location>
</feature>
<feature type="modified residue" description="Phosphoserine" evidence="2">
    <location>
        <position position="1378"/>
    </location>
</feature>
<feature type="modified residue" description="Phosphoserine" evidence="9 13">
    <location>
        <position position="1380"/>
    </location>
</feature>
<feature type="modified residue" description="Phosphothreonine" evidence="2">
    <location>
        <position position="1390"/>
    </location>
</feature>
<feature type="modified residue" description="Phosphoserine" evidence="12 13">
    <location>
        <position position="1400"/>
    </location>
</feature>
<feature type="modified residue" description="Phosphoserine" evidence="2">
    <location>
        <position position="1407"/>
    </location>
</feature>
<feature type="modified residue" description="Phosphothreonine" evidence="2">
    <location>
        <position position="1409"/>
    </location>
</feature>
<feature type="modified residue" description="Phosphoserine" evidence="2">
    <location>
        <position position="1414"/>
    </location>
</feature>
<feature type="modified residue" description="Phosphoserine" evidence="2">
    <location>
        <position position="1416"/>
    </location>
</feature>
<feature type="modified residue" description="Phosphoserine" evidence="2">
    <location>
        <position position="1418"/>
    </location>
</feature>
<feature type="modified residue" description="Phosphoserine" evidence="2">
    <location>
        <position position="1419"/>
    </location>
</feature>
<feature type="modified residue" description="Phosphothreonine" evidence="13">
    <location>
        <position position="1428"/>
    </location>
</feature>
<feature type="modified residue" description="Phosphoserine" evidence="2">
    <location>
        <position position="1438"/>
    </location>
</feature>
<feature type="modified residue" description="Phosphoserine" evidence="2">
    <location>
        <position position="1439"/>
    </location>
</feature>
<feature type="modified residue" description="Phosphothreonine" evidence="2">
    <location>
        <position position="1448"/>
    </location>
</feature>
<feature type="modified residue" description="Phosphoserine" evidence="2">
    <location>
        <position position="1453"/>
    </location>
</feature>
<feature type="modified residue" description="Phosphoserine" evidence="2">
    <location>
        <position position="1455"/>
    </location>
</feature>
<feature type="modified residue" description="Phosphoserine" evidence="2">
    <location>
        <position position="1457"/>
    </location>
</feature>
<feature type="modified residue" description="Phosphoserine" evidence="2">
    <location>
        <position position="1458"/>
    </location>
</feature>
<feature type="modified residue" description="Phosphoserine" evidence="12">
    <location>
        <position position="1465"/>
    </location>
</feature>
<feature type="modified residue" description="Phosphothreonine" evidence="12">
    <location>
        <position position="1467"/>
    </location>
</feature>
<feature type="modified residue" description="Phosphoserine" evidence="2">
    <location>
        <position position="1473"/>
    </location>
</feature>
<feature type="modified residue" description="Phosphoserine" evidence="2">
    <location>
        <position position="1475"/>
    </location>
</feature>
<feature type="modified residue" description="Phosphoserine" evidence="2">
    <location>
        <position position="1477"/>
    </location>
</feature>
<feature type="modified residue" description="Phosphoserine" evidence="2">
    <location>
        <position position="1478"/>
    </location>
</feature>
<feature type="modified residue" description="Phosphothreonine" evidence="2">
    <location>
        <position position="1487"/>
    </location>
</feature>
<feature type="modified residue" description="Phosphoserine" evidence="2">
    <location>
        <position position="1493"/>
    </location>
</feature>
<feature type="modified residue" description="Phosphoserine" evidence="2">
    <location>
        <position position="1495"/>
    </location>
</feature>
<feature type="modified residue" description="Phosphoserine" evidence="2">
    <location>
        <position position="1497"/>
    </location>
</feature>
<feature type="modified residue" description="Phosphoserine" evidence="2">
    <location>
        <position position="1498"/>
    </location>
</feature>
<feature type="modified residue" description="Phosphoserine" evidence="13">
    <location>
        <position position="1508"/>
    </location>
</feature>
<feature type="modified residue" description="Phosphoserine" evidence="2">
    <location>
        <position position="1533"/>
    </location>
</feature>
<feature type="modified residue" description="Phosphoserine" evidence="2">
    <location>
        <position position="1535"/>
    </location>
</feature>
<feature type="modified residue" description="Phosphoserine" evidence="2">
    <location>
        <position position="1537"/>
    </location>
</feature>
<feature type="modified residue" description="Phosphoserine" evidence="2">
    <location>
        <position position="1538"/>
    </location>
</feature>
<feature type="modified residue" description="Phosphoserine" evidence="2">
    <location>
        <position position="1554"/>
    </location>
</feature>
<feature type="modified residue" description="Phosphoserine" evidence="2">
    <location>
        <position position="1556"/>
    </location>
</feature>
<feature type="modified residue" description="Phosphoserine" evidence="2">
    <location>
        <position position="1557"/>
    </location>
</feature>
<feature type="modified residue" description="Phosphoserine" evidence="11 13">
    <location>
        <position position="1572"/>
    </location>
</feature>
<feature type="modified residue" description="Phosphoserine" evidence="9 11 13">
    <location>
        <position position="1576"/>
    </location>
</feature>
<feature type="modified residue" description="Phosphoserine" evidence="9 11 13">
    <location>
        <position position="1577"/>
    </location>
</feature>
<feature type="modified residue" description="Phosphoserine" evidence="2">
    <location>
        <position position="1604"/>
    </location>
</feature>
<feature type="modified residue" description="Phosphoserine" evidence="2">
    <location>
        <position position="1614"/>
    </location>
</feature>
<feature type="modified residue" description="Phosphoserine" evidence="2">
    <location>
        <position position="1647"/>
    </location>
</feature>
<feature type="modified residue" description="Phosphoserine" evidence="2">
    <location>
        <position position="1649"/>
    </location>
</feature>
<feature type="modified residue" description="Phosphoserine" evidence="2">
    <location>
        <position position="1650"/>
    </location>
</feature>
<feature type="modified residue" description="Phosphothreonine" evidence="2">
    <location>
        <position position="1654"/>
    </location>
</feature>
<feature type="modified residue" description="Phosphoserine" evidence="2">
    <location>
        <position position="1683"/>
    </location>
</feature>
<feature type="modified residue" description="Phosphoserine" evidence="2">
    <location>
        <position position="1685"/>
    </location>
</feature>
<feature type="modified residue" description="Phosphoserine" evidence="2">
    <location>
        <position position="1687"/>
    </location>
</feature>
<feature type="modified residue" description="Phosphoserine" evidence="2">
    <location>
        <position position="1688"/>
    </location>
</feature>
<feature type="modified residue" description="Phosphoserine" evidence="2">
    <location>
        <position position="1718"/>
    </location>
</feature>
<feature type="modified residue" description="Phosphoserine" evidence="2">
    <location>
        <position position="1720"/>
    </location>
</feature>
<feature type="modified residue" description="Phosphoserine" evidence="2">
    <location>
        <position position="1774"/>
    </location>
</feature>
<feature type="modified residue" description="Phosphoserine" evidence="2">
    <location>
        <position position="1778"/>
    </location>
</feature>
<feature type="modified residue" description="Phosphoserine" evidence="2">
    <location>
        <position position="1810"/>
    </location>
</feature>
<feature type="modified residue" description="Phosphoserine" evidence="13">
    <location>
        <position position="1813"/>
    </location>
</feature>
<feature type="modified residue" description="Phosphoserine" evidence="2">
    <location>
        <position position="1832"/>
    </location>
</feature>
<feature type="modified residue" description="Phosphoserine" evidence="2">
    <location>
        <position position="1834"/>
    </location>
</feature>
<feature type="modified residue" description="Phosphothreonine" evidence="2">
    <location>
        <position position="1836"/>
    </location>
</feature>
<feature type="modified residue" description="Phosphoserine" evidence="2">
    <location>
        <position position="1840"/>
    </location>
</feature>
<feature type="modified residue" description="Phosphoserine" evidence="2">
    <location>
        <position position="1846"/>
    </location>
</feature>
<feature type="modified residue" description="Phosphothreonine" evidence="2">
    <location>
        <position position="1848"/>
    </location>
</feature>
<feature type="modified residue" description="Phosphoserine" evidence="2">
    <location>
        <position position="1849"/>
    </location>
</feature>
<feature type="modified residue" description="Phosphoserine" evidence="2">
    <location>
        <position position="1869"/>
    </location>
</feature>
<feature type="modified residue" description="Phosphoserine" evidence="2">
    <location>
        <position position="1872"/>
    </location>
</feature>
<feature type="modified residue" description="Phosphoserine" evidence="2">
    <location>
        <position position="1876"/>
    </location>
</feature>
<feature type="modified residue" description="Phosphoserine" evidence="2">
    <location>
        <position position="1878"/>
    </location>
</feature>
<feature type="modified residue" description="Phosphothreonine" evidence="2">
    <location>
        <position position="1880"/>
    </location>
</feature>
<feature type="modified residue" description="Phosphothreonine" evidence="2">
    <location>
        <position position="1884"/>
    </location>
</feature>
<feature type="modified residue" description="Phosphoserine" evidence="2">
    <location>
        <position position="1898"/>
    </location>
</feature>
<feature type="modified residue" description="Phosphoserine" evidence="2">
    <location>
        <position position="1900"/>
    </location>
</feature>
<feature type="modified residue" description="Phosphothreonine" evidence="2">
    <location>
        <position position="1902"/>
    </location>
</feature>
<feature type="modified residue" description="Phosphothreonine" evidence="2">
    <location>
        <position position="1906"/>
    </location>
</feature>
<feature type="modified residue" description="Phosphoserine" evidence="2">
    <location>
        <position position="1910"/>
    </location>
</feature>
<feature type="modified residue" description="Phosphoserine" evidence="2">
    <location>
        <position position="1912"/>
    </location>
</feature>
<feature type="modified residue" description="Phosphothreonine" evidence="2">
    <location>
        <position position="1914"/>
    </location>
</feature>
<feature type="modified residue" description="Phosphothreonine" evidence="2">
    <location>
        <position position="1918"/>
    </location>
</feature>
<feature type="modified residue" description="Phosphoserine" evidence="2">
    <location>
        <position position="1922"/>
    </location>
</feature>
<feature type="modified residue" description="Phosphoserine" evidence="2">
    <location>
        <position position="1924"/>
    </location>
</feature>
<feature type="modified residue" description="Phosphoserine" evidence="2">
    <location>
        <position position="1927"/>
    </location>
</feature>
<feature type="modified residue" description="Phosphothreonine" evidence="2">
    <location>
        <position position="1930"/>
    </location>
</feature>
<feature type="modified residue" description="Phosphoserine" evidence="2">
    <location>
        <position position="1936"/>
    </location>
</feature>
<feature type="modified residue" description="Phosphoserine" evidence="2">
    <location>
        <position position="1939"/>
    </location>
</feature>
<feature type="modified residue" description="Phosphoserine" evidence="2">
    <location>
        <position position="1948"/>
    </location>
</feature>
<feature type="modified residue" description="Phosphoserine" evidence="2">
    <location>
        <position position="1951"/>
    </location>
</feature>
<feature type="modified residue" description="Phosphoserine" evidence="2">
    <location>
        <position position="1960"/>
    </location>
</feature>
<feature type="modified residue" description="Phosphoserine" evidence="2">
    <location>
        <position position="1963"/>
    </location>
</feature>
<feature type="modified residue" description="Phosphoserine" evidence="2">
    <location>
        <position position="1970"/>
    </location>
</feature>
<feature type="modified residue" description="Phosphoserine" evidence="2">
    <location>
        <position position="1972"/>
    </location>
</feature>
<feature type="modified residue" description="Phosphothreonine" evidence="2">
    <location>
        <position position="1974"/>
    </location>
</feature>
<feature type="modified residue" description="Phosphoserine" evidence="11">
    <location>
        <position position="1982"/>
    </location>
</feature>
<feature type="modified residue" description="Phosphoserine" evidence="11">
    <location>
        <position position="1984"/>
    </location>
</feature>
<feature type="modified residue" description="Phosphothreonine" evidence="11">
    <location>
        <position position="1986"/>
    </location>
</feature>
<feature type="modified residue" description="Phosphoserine" evidence="2">
    <location>
        <position position="1994"/>
    </location>
</feature>
<feature type="modified residue" description="Phosphoserine" evidence="2">
    <location>
        <position position="1996"/>
    </location>
</feature>
<feature type="modified residue" description="Phosphoserine" evidence="2">
    <location>
        <position position="1998"/>
    </location>
</feature>
<feature type="modified residue" description="Phosphoserine" evidence="2">
    <location>
        <position position="2019"/>
    </location>
</feature>
<feature type="modified residue" description="Phosphothreonine" evidence="2">
    <location>
        <position position="2021"/>
    </location>
</feature>
<feature type="modified residue" description="Phosphoserine" evidence="2">
    <location>
        <position position="2023"/>
    </location>
</feature>
<feature type="modified residue" description="Phosphoserine" evidence="2">
    <location>
        <position position="2042"/>
    </location>
</feature>
<feature type="modified residue" description="Phosphothreonine" evidence="2">
    <location>
        <position position="2044"/>
    </location>
</feature>
<feature type="modified residue" description="Phosphoserine" evidence="9 10 11 13">
    <location>
        <position position="2052"/>
    </location>
</feature>
<feature type="modified residue" description="Phosphoserine" evidence="9 10 11 13">
    <location>
        <position position="2054"/>
    </location>
</feature>
<feature type="modified residue" description="Phosphothreonine" evidence="9 10 11 13">
    <location>
        <position position="2056"/>
    </location>
</feature>
<feature type="modified residue" description="Phosphoserine" evidence="13">
    <location>
        <position position="2070"/>
    </location>
</feature>
<feature type="modified residue" description="Phosphoserine" evidence="9 13">
    <location>
        <position position="2073"/>
    </location>
</feature>
<feature type="modified residue" description="Phosphoserine" evidence="9 13">
    <location>
        <position position="2075"/>
    </location>
</feature>
<feature type="modified residue" description="Phosphoserine" evidence="13">
    <location>
        <position position="2084"/>
    </location>
</feature>
<feature type="modified residue" description="Phosphothreonine" evidence="2">
    <location>
        <position position="2096"/>
    </location>
</feature>
<feature type="modified residue" description="Omega-N-methylarginine" evidence="15">
    <location>
        <position position="2146"/>
    </location>
</feature>
<feature type="modified residue" description="Omega-N-methylarginine" evidence="15">
    <location>
        <position position="2159"/>
    </location>
</feature>
<feature type="modified residue" description="Omega-N-methylarginine" evidence="2">
    <location>
        <position position="2183"/>
    </location>
</feature>
<feature type="modified residue" description="Omega-N-methylarginine" evidence="2">
    <location>
        <position position="2198"/>
    </location>
</feature>
<feature type="modified residue" description="Phosphoserine" evidence="9 11 12 13">
    <location>
        <position position="2224"/>
    </location>
</feature>
<feature type="modified residue" description="Omega-N-methylarginine" evidence="2">
    <location>
        <position position="2226"/>
    </location>
</feature>
<feature type="modified residue" description="Omega-N-methylarginine" evidence="2">
    <location>
        <position position="2240"/>
    </location>
</feature>
<feature type="modified residue" description="Phosphothreonine" evidence="2">
    <location>
        <position position="2241"/>
    </location>
</feature>
<feature type="modified residue" description="Phosphothreonine" evidence="2">
    <location>
        <position position="2254"/>
    </location>
</feature>
<feature type="modified residue" description="Phosphoserine" evidence="2">
    <location>
        <position position="2262"/>
    </location>
</feature>
<feature type="modified residue" description="Phosphothreonine" evidence="2">
    <location>
        <position position="2268"/>
    </location>
</feature>
<feature type="modified residue" description="Phosphothreonine" evidence="2">
    <location>
        <position position="2281"/>
    </location>
</feature>
<feature type="modified residue" description="Omega-N-methylarginine" evidence="15">
    <location>
        <position position="2295"/>
    </location>
</feature>
<feature type="modified residue" description="Phosphoserine" evidence="2">
    <location>
        <position position="2296"/>
    </location>
</feature>
<feature type="modified residue" description="Phosphoserine" evidence="2">
    <location>
        <position position="2321"/>
    </location>
</feature>
<feature type="modified residue" description="Phosphoserine" evidence="2">
    <location>
        <position position="2329"/>
    </location>
</feature>
<feature type="modified residue" description="Phosphothreonine" evidence="2">
    <location>
        <position position="2334"/>
    </location>
</feature>
<feature type="modified residue" description="Phosphoserine" evidence="11 12 13">
    <location>
        <position position="2335"/>
    </location>
</feature>
<feature type="modified residue" description="Asymmetric dimethylarginine; alternate" evidence="15">
    <location>
        <position position="2337"/>
    </location>
</feature>
<feature type="modified residue" description="Omega-N-methylarginine; alternate" evidence="2">
    <location>
        <position position="2337"/>
    </location>
</feature>
<feature type="modified residue" description="Phosphoserine" evidence="2">
    <location>
        <position position="2347"/>
    </location>
</feature>
<feature type="modified residue" description="Phosphoserine" evidence="11 13">
    <location>
        <position position="2351"/>
    </location>
</feature>
<feature type="modified residue" description="Phosphoserine" evidence="2">
    <location>
        <position position="2360"/>
    </location>
</feature>
<feature type="modified residue" description="Phosphothreonine" evidence="2">
    <location>
        <position position="2362"/>
    </location>
</feature>
<feature type="modified residue" description="Phosphoserine" evidence="2">
    <location>
        <position position="2365"/>
    </location>
</feature>
<feature type="modified residue" description="Phosphoserine" evidence="2">
    <location>
        <position position="2368"/>
    </location>
</feature>
<feature type="modified residue" description="Phosphoserine" evidence="12">
    <location>
        <position position="2381"/>
    </location>
</feature>
<feature type="modified residue" description="Phosphoserine" evidence="2">
    <location>
        <position position="2384"/>
    </location>
</feature>
<feature type="modified residue" description="Phosphoserine" evidence="9 11 12 13">
    <location>
        <position position="2404"/>
    </location>
</feature>
<feature type="modified residue" description="Phosphoserine" evidence="2">
    <location>
        <position position="2408"/>
    </location>
</feature>
<feature type="modified residue" description="Phosphoserine" evidence="13">
    <location>
        <position position="2535"/>
    </location>
</feature>
<feature type="modified residue" description="Phosphothreonine" evidence="2">
    <location>
        <position position="2537"/>
    </location>
</feature>
<feature type="modified residue" description="Phosphothreonine" evidence="2">
    <location>
        <position position="2553"/>
    </location>
</feature>
<feature type="modified residue" description="Phosphoserine" evidence="2">
    <location>
        <position position="2618"/>
    </location>
</feature>
<feature type="modified residue" description="Phosphoserine" evidence="2">
    <location>
        <position position="2629"/>
    </location>
</feature>
<feature type="modified residue" description="Phosphoserine" evidence="2">
    <location>
        <position position="2631"/>
    </location>
</feature>
<feature type="modified residue" description="Phosphoserine" evidence="2">
    <location>
        <position position="2638"/>
    </location>
</feature>
<feature type="modified residue" description="Phosphoserine" evidence="2">
    <location>
        <position position="2642"/>
    </location>
</feature>
<feature type="modified residue" description="Phosphoserine" evidence="2">
    <location>
        <position position="2644"/>
    </location>
</feature>
<feature type="modified residue" description="Phosphoserine" evidence="11">
    <location>
        <position position="2646"/>
    </location>
</feature>
<feature type="modified residue" description="Phosphoserine" evidence="11">
    <location>
        <position position="2648"/>
    </location>
</feature>
<feature type="modified residue" description="Phosphoserine" evidence="11 13">
    <location>
        <position position="2656"/>
    </location>
</feature>
<feature type="modified residue" description="Phosphoserine" evidence="11">
    <location>
        <position position="2660"/>
    </location>
</feature>
<feature type="modified residue" description="Phosphothreonine" evidence="2">
    <location>
        <position position="2689"/>
    </location>
</feature>
<feature type="modified residue" description="Phosphoserine" evidence="2">
    <location>
        <position position="2691"/>
    </location>
</feature>
<feature type="cross-link" description="Glycyl lysine isopeptide (Lys-Gly) (interchain with G-Cter in SUMO2)" evidence="2">
    <location>
        <position position="108"/>
    </location>
</feature>
<feature type="cross-link" description="Glycyl lysine isopeptide (Lys-Gly) (interchain with G-Cter in SUMO2)" evidence="2">
    <location>
        <position position="130"/>
    </location>
</feature>
<feature type="cross-link" description="Glycyl lysine isopeptide (Lys-Gly) (interchain with G-Cter in SUMO2)" evidence="2">
    <location>
        <position position="2541"/>
    </location>
</feature>
<feature type="splice variant" id="VSP_020188" description="In isoform 2." evidence="6">
    <location>
        <begin position="1"/>
        <end position="96"/>
    </location>
</feature>
<feature type="splice variant" id="VSP_020189" description="In isoform 3." evidence="5">
    <location>
        <begin position="2486"/>
        <end position="2585"/>
    </location>
</feature>
<feature type="sequence conflict" description="In Ref. 1; BAC41104/BAE42172." evidence="7" ref="1">
    <original>V</original>
    <variation>D</variation>
    <location>
        <position position="373"/>
    </location>
</feature>
<feature type="sequence conflict" description="In Ref. 1; BAC41104/BAE42172." evidence="7" ref="1">
    <original>G</original>
    <variation>V</variation>
    <location>
        <position position="428"/>
    </location>
</feature>
<feature type="sequence conflict" description="In Ref. 1; BAC41104/BAE42172." evidence="7" ref="1">
    <original>A</original>
    <variation>T</variation>
    <location>
        <position position="618"/>
    </location>
</feature>
<feature type="sequence conflict" description="In Ref. 1; BAC41104." evidence="7" ref="1">
    <original>I</original>
    <variation>V</variation>
    <location>
        <position position="927"/>
    </location>
</feature>
<feature type="sequence conflict" description="In Ref. 1; BAC41104 and 5; BAC65530." evidence="7" ref="1 5">
    <original>L</original>
    <variation>P</variation>
    <location>
        <position position="967"/>
    </location>
</feature>
<feature type="sequence conflict" description="In Ref. 1; BAC41104." evidence="7" ref="1">
    <original>E</original>
    <variation>G</variation>
    <location>
        <position position="1255"/>
    </location>
</feature>
<feature type="sequence conflict" description="In Ref. 1; BAC41104 and 5; BAC65530." evidence="7" ref="1 5">
    <original>H</original>
    <variation>R</variation>
    <location>
        <position position="1639"/>
    </location>
</feature>
<feature type="sequence conflict" description="In Ref. 1; BAC41104." evidence="7" ref="1">
    <original>R</original>
    <variation>I</variation>
    <location>
        <position position="1835"/>
    </location>
</feature>
<feature type="sequence conflict" description="In Ref. 1; BAC41104, 3; AAH27781 and 5; BAC65530." evidence="7" ref="1 3 5">
    <original>V</original>
    <variation>A</variation>
    <location>
        <position position="2418"/>
    </location>
</feature>
<feature type="sequence conflict" description="In Ref. 1; BAC41104." evidence="7" ref="1">
    <original>R</original>
    <variation>G</variation>
    <location>
        <position position="2628"/>
    </location>
</feature>
<comment type="function">
    <text evidence="2">Required for pre-mRNA splicing as component of the spliceosome. As a component of the minor spliceosome, involved in the splicing of U12-type introns in pre-mRNAs (By similarity).</text>
</comment>
<comment type="subunit">
    <text evidence="2">Component of pre-catalytic, catalytic and post-catalytic spliceosome complexes. Found in a pre-mRNA splicing complex with SFRS4, SFRS5, SNRP70, SNRPA1, SRRM1 and SRRM2. Component of the minor spliceosome, which splices U12-type introns (By similarity). Interacts with DHX8. Interacts with CACTIN.</text>
</comment>
<comment type="subcellular location">
    <subcellularLocation>
        <location evidence="2">Nucleus</location>
    </subcellularLocation>
    <subcellularLocation>
        <location evidence="2">Nucleus speckle</location>
    </subcellularLocation>
</comment>
<comment type="alternative products">
    <event type="alternative splicing"/>
    <isoform>
        <id>Q8BTI8-1</id>
        <name>1</name>
        <sequence type="displayed"/>
    </isoform>
    <isoform>
        <id>Q8BTI8-2</id>
        <name>2</name>
        <sequence type="described" ref="VSP_020188"/>
    </isoform>
    <isoform>
        <id>Q8BTI8-3</id>
        <name>3</name>
        <sequence type="described" ref="VSP_020189"/>
    </isoform>
</comment>
<comment type="similarity">
    <text evidence="7">Belongs to the CWC21 family.</text>
</comment>
<comment type="sequence caution" evidence="7">
    <conflict type="erroneous initiation">
        <sequence resource="EMBL-CDS" id="AAH27781"/>
    </conflict>
    <text>Truncated N-terminus.</text>
</comment>
<keyword id="KW-0007">Acetylation</keyword>
<keyword id="KW-0025">Alternative splicing</keyword>
<keyword id="KW-0175">Coiled coil</keyword>
<keyword id="KW-0903">Direct protein sequencing</keyword>
<keyword id="KW-1017">Isopeptide bond</keyword>
<keyword id="KW-0488">Methylation</keyword>
<keyword id="KW-0507">mRNA processing</keyword>
<keyword id="KW-0508">mRNA splicing</keyword>
<keyword id="KW-0539">Nucleus</keyword>
<keyword id="KW-0597">Phosphoprotein</keyword>
<keyword id="KW-1185">Reference proteome</keyword>
<keyword id="KW-0747">Spliceosome</keyword>
<keyword id="KW-0832">Ubl conjugation</keyword>
<name>SRRM2_MOUSE</name>
<dbReference type="EMBL" id="AK090123">
    <property type="protein sequence ID" value="BAC41104.1"/>
    <property type="molecule type" value="mRNA"/>
</dbReference>
<dbReference type="EMBL" id="AK171001">
    <property type="protein sequence ID" value="BAE42172.1"/>
    <property type="molecule type" value="mRNA"/>
</dbReference>
<dbReference type="EMBL" id="AC122821">
    <property type="status" value="NOT_ANNOTATED_CDS"/>
    <property type="molecule type" value="Genomic_DNA"/>
</dbReference>
<dbReference type="EMBL" id="BC027781">
    <property type="protein sequence ID" value="AAH27781.1"/>
    <property type="status" value="ALT_INIT"/>
    <property type="molecule type" value="mRNA"/>
</dbReference>
<dbReference type="EMBL" id="BC092355">
    <property type="protein sequence ID" value="AAH92355.1"/>
    <property type="molecule type" value="mRNA"/>
</dbReference>
<dbReference type="EMBL" id="AK122248">
    <property type="protein sequence ID" value="BAC65530.1"/>
    <property type="molecule type" value="mRNA"/>
</dbReference>
<dbReference type="CCDS" id="CCDS37475.1">
    <molecule id="Q8BTI8-2"/>
</dbReference>
<dbReference type="CCDS" id="CCDS89004.1">
    <molecule id="Q8BTI8-1"/>
</dbReference>
<dbReference type="RefSeq" id="NP_001355616.1">
    <molecule id="Q8BTI8-1"/>
    <property type="nucleotide sequence ID" value="NM_001368687.1"/>
</dbReference>
<dbReference type="RefSeq" id="NP_780438.2">
    <molecule id="Q8BTI8-2"/>
    <property type="nucleotide sequence ID" value="NM_175229.3"/>
</dbReference>
<dbReference type="RefSeq" id="XP_006525139.1">
    <property type="nucleotide sequence ID" value="XM_006525076.3"/>
</dbReference>
<dbReference type="RefSeq" id="XP_006525140.1">
    <molecule id="Q8BTI8-1"/>
    <property type="nucleotide sequence ID" value="XM_006525077.5"/>
</dbReference>
<dbReference type="RefSeq" id="XP_030105988.1">
    <molecule id="Q8BTI8-1"/>
    <property type="nucleotide sequence ID" value="XM_030250128.2"/>
</dbReference>
<dbReference type="SMR" id="Q8BTI8"/>
<dbReference type="BioGRID" id="217871">
    <property type="interactions" value="68"/>
</dbReference>
<dbReference type="FunCoup" id="Q8BTI8">
    <property type="interactions" value="1764"/>
</dbReference>
<dbReference type="IntAct" id="Q8BTI8">
    <property type="interactions" value="5"/>
</dbReference>
<dbReference type="MINT" id="Q8BTI8"/>
<dbReference type="STRING" id="10090.ENSMUSP00000085993"/>
<dbReference type="GlyGen" id="Q8BTI8">
    <property type="glycosylation" value="18 sites, 1 N-linked glycan (1 site), 1 O-linked glycan (11 sites)"/>
</dbReference>
<dbReference type="iPTMnet" id="Q8BTI8"/>
<dbReference type="PhosphoSitePlus" id="Q8BTI8"/>
<dbReference type="SwissPalm" id="Q8BTI8"/>
<dbReference type="REPRODUCTION-2DPAGE" id="IPI00225062"/>
<dbReference type="REPRODUCTION-2DPAGE" id="IPI00785240"/>
<dbReference type="jPOST" id="Q8BTI8"/>
<dbReference type="PaxDb" id="10090-ENSMUSP00000085993"/>
<dbReference type="PeptideAtlas" id="Q8BTI8"/>
<dbReference type="ProteomicsDB" id="258605">
    <molecule id="Q8BTI8-1"/>
</dbReference>
<dbReference type="ProteomicsDB" id="258606">
    <molecule id="Q8BTI8-2"/>
</dbReference>
<dbReference type="ProteomicsDB" id="258607">
    <molecule id="Q8BTI8-3"/>
</dbReference>
<dbReference type="Pumba" id="Q8BTI8"/>
<dbReference type="Antibodypedia" id="52249">
    <property type="antibodies" value="85 antibodies from 18 providers"/>
</dbReference>
<dbReference type="DNASU" id="75956"/>
<dbReference type="Ensembl" id="ENSMUST00000088621.11">
    <molecule id="Q8BTI8-2"/>
    <property type="protein sequence ID" value="ENSMUSP00000085993.5"/>
    <property type="gene ID" value="ENSMUSG00000039218.18"/>
</dbReference>
<dbReference type="Ensembl" id="ENSMUST00000190686.7">
    <molecule id="Q8BTI8-1"/>
    <property type="protein sequence ID" value="ENSMUSP00000139842.2"/>
    <property type="gene ID" value="ENSMUSG00000039218.18"/>
</dbReference>
<dbReference type="GeneID" id="75956"/>
<dbReference type="KEGG" id="mmu:75956"/>
<dbReference type="UCSC" id="uc008atn.1">
    <molecule id="Q8BTI8-1"/>
    <property type="organism name" value="mouse"/>
</dbReference>
<dbReference type="AGR" id="MGI:1923206"/>
<dbReference type="CTD" id="23524"/>
<dbReference type="MGI" id="MGI:1923206">
    <property type="gene designation" value="Srrm2"/>
</dbReference>
<dbReference type="VEuPathDB" id="HostDB:ENSMUSG00000039218"/>
<dbReference type="eggNOG" id="KOG1869">
    <property type="taxonomic scope" value="Eukaryota"/>
</dbReference>
<dbReference type="GeneTree" id="ENSGT00940000161127"/>
<dbReference type="HOGENOM" id="CLU_000647_0_0_1"/>
<dbReference type="InParanoid" id="Q8BTI8"/>
<dbReference type="OMA" id="QQCIIHY"/>
<dbReference type="OrthoDB" id="10267305at2759"/>
<dbReference type="TreeFam" id="TF335721"/>
<dbReference type="Reactome" id="R-MMU-72163">
    <property type="pathway name" value="mRNA Splicing - Major Pathway"/>
</dbReference>
<dbReference type="BioGRID-ORCS" id="75956">
    <property type="hits" value="5 hits in 29 CRISPR screens"/>
</dbReference>
<dbReference type="ChiTaRS" id="Srrm2">
    <property type="organism name" value="mouse"/>
</dbReference>
<dbReference type="PRO" id="PR:Q8BTI8"/>
<dbReference type="Proteomes" id="UP000000589">
    <property type="component" value="Chromosome 17"/>
</dbReference>
<dbReference type="RNAct" id="Q8BTI8">
    <property type="molecule type" value="protein"/>
</dbReference>
<dbReference type="Bgee" id="ENSMUSG00000039218">
    <property type="expression patterns" value="Expressed in rostral migratory stream and 226 other cell types or tissues"/>
</dbReference>
<dbReference type="ExpressionAtlas" id="Q8BTI8">
    <property type="expression patterns" value="baseline and differential"/>
</dbReference>
<dbReference type="GO" id="GO:0015030">
    <property type="term" value="C:Cajal body"/>
    <property type="evidence" value="ECO:0007669"/>
    <property type="project" value="Ensembl"/>
</dbReference>
<dbReference type="GO" id="GO:0016607">
    <property type="term" value="C:nuclear speck"/>
    <property type="evidence" value="ECO:0007669"/>
    <property type="project" value="UniProtKB-SubCell"/>
</dbReference>
<dbReference type="GO" id="GO:0005634">
    <property type="term" value="C:nucleus"/>
    <property type="evidence" value="ECO:0000250"/>
    <property type="project" value="UniProtKB"/>
</dbReference>
<dbReference type="GO" id="GO:0071007">
    <property type="term" value="C:U2-type catalytic step 2 spliceosome"/>
    <property type="evidence" value="ECO:0000250"/>
    <property type="project" value="UniProtKB"/>
</dbReference>
<dbReference type="GO" id="GO:0071005">
    <property type="term" value="C:U2-type precatalytic spliceosome"/>
    <property type="evidence" value="ECO:0000250"/>
    <property type="project" value="UniProtKB"/>
</dbReference>
<dbReference type="GO" id="GO:0070742">
    <property type="term" value="F:C2H2 zinc finger domain binding"/>
    <property type="evidence" value="ECO:0007669"/>
    <property type="project" value="Ensembl"/>
</dbReference>
<dbReference type="GO" id="GO:0000398">
    <property type="term" value="P:mRNA splicing, via spliceosome"/>
    <property type="evidence" value="ECO:0000250"/>
    <property type="project" value="UniProtKB"/>
</dbReference>
<dbReference type="CDD" id="cd21375">
    <property type="entry name" value="cwf21_SRRM2"/>
    <property type="match status" value="1"/>
</dbReference>
<dbReference type="InterPro" id="IPR013170">
    <property type="entry name" value="mRNA_splic_Cwf21_dom"/>
</dbReference>
<dbReference type="InterPro" id="IPR024945">
    <property type="entry name" value="Spt5_C_dom"/>
</dbReference>
<dbReference type="InterPro" id="IPR047490">
    <property type="entry name" value="SRRM2_cwf21"/>
</dbReference>
<dbReference type="InterPro" id="IPR052109">
    <property type="entry name" value="SRRM_Domain-Containing"/>
</dbReference>
<dbReference type="PANTHER" id="PTHR34755">
    <property type="entry name" value="SERINE/ARGININE REPETITIVE MATRIX PROTEIN 3-RELATED"/>
    <property type="match status" value="1"/>
</dbReference>
<dbReference type="PANTHER" id="PTHR34755:SF3">
    <property type="entry name" value="SERINE_ARGININE REPETITIVE MATRIX PROTEIN 2"/>
    <property type="match status" value="1"/>
</dbReference>
<dbReference type="Pfam" id="PF08312">
    <property type="entry name" value="cwf21"/>
    <property type="match status" value="1"/>
</dbReference>
<dbReference type="SMART" id="SM01104">
    <property type="entry name" value="CTD"/>
    <property type="match status" value="1"/>
</dbReference>
<accession>Q8BTI8</accession>
<accession>E9QNB0</accession>
<accession>Q3TBY5</accession>
<accession>Q569P9</accession>
<accession>Q80U37</accession>
<accession>Q8K383</accession>
<gene>
    <name type="primary">Srrm2</name>
    <name type="synonym">Kiaa0324</name>
</gene>
<organism>
    <name type="scientific">Mus musculus</name>
    <name type="common">Mouse</name>
    <dbReference type="NCBI Taxonomy" id="10090"/>
    <lineage>
        <taxon>Eukaryota</taxon>
        <taxon>Metazoa</taxon>
        <taxon>Chordata</taxon>
        <taxon>Craniata</taxon>
        <taxon>Vertebrata</taxon>
        <taxon>Euteleostomi</taxon>
        <taxon>Mammalia</taxon>
        <taxon>Eutheria</taxon>
        <taxon>Euarchontoglires</taxon>
        <taxon>Glires</taxon>
        <taxon>Rodentia</taxon>
        <taxon>Myomorpha</taxon>
        <taxon>Muroidea</taxon>
        <taxon>Muridae</taxon>
        <taxon>Murinae</taxon>
        <taxon>Mus</taxon>
        <taxon>Mus</taxon>
    </lineage>
</organism>
<reference key="1">
    <citation type="journal article" date="2005" name="Science">
        <title>The transcriptional landscape of the mammalian genome.</title>
        <authorList>
            <person name="Carninci P."/>
            <person name="Kasukawa T."/>
            <person name="Katayama S."/>
            <person name="Gough J."/>
            <person name="Frith M.C."/>
            <person name="Maeda N."/>
            <person name="Oyama R."/>
            <person name="Ravasi T."/>
            <person name="Lenhard B."/>
            <person name="Wells C."/>
            <person name="Kodzius R."/>
            <person name="Shimokawa K."/>
            <person name="Bajic V.B."/>
            <person name="Brenner S.E."/>
            <person name="Batalov S."/>
            <person name="Forrest A.R."/>
            <person name="Zavolan M."/>
            <person name="Davis M.J."/>
            <person name="Wilming L.G."/>
            <person name="Aidinis V."/>
            <person name="Allen J.E."/>
            <person name="Ambesi-Impiombato A."/>
            <person name="Apweiler R."/>
            <person name="Aturaliya R.N."/>
            <person name="Bailey T.L."/>
            <person name="Bansal M."/>
            <person name="Baxter L."/>
            <person name="Beisel K.W."/>
            <person name="Bersano T."/>
            <person name="Bono H."/>
            <person name="Chalk A.M."/>
            <person name="Chiu K.P."/>
            <person name="Choudhary V."/>
            <person name="Christoffels A."/>
            <person name="Clutterbuck D.R."/>
            <person name="Crowe M.L."/>
            <person name="Dalla E."/>
            <person name="Dalrymple B.P."/>
            <person name="de Bono B."/>
            <person name="Della Gatta G."/>
            <person name="di Bernardo D."/>
            <person name="Down T."/>
            <person name="Engstrom P."/>
            <person name="Fagiolini M."/>
            <person name="Faulkner G."/>
            <person name="Fletcher C.F."/>
            <person name="Fukushima T."/>
            <person name="Furuno M."/>
            <person name="Futaki S."/>
            <person name="Gariboldi M."/>
            <person name="Georgii-Hemming P."/>
            <person name="Gingeras T.R."/>
            <person name="Gojobori T."/>
            <person name="Green R.E."/>
            <person name="Gustincich S."/>
            <person name="Harbers M."/>
            <person name="Hayashi Y."/>
            <person name="Hensch T.K."/>
            <person name="Hirokawa N."/>
            <person name="Hill D."/>
            <person name="Huminiecki L."/>
            <person name="Iacono M."/>
            <person name="Ikeo K."/>
            <person name="Iwama A."/>
            <person name="Ishikawa T."/>
            <person name="Jakt M."/>
            <person name="Kanapin A."/>
            <person name="Katoh M."/>
            <person name="Kawasawa Y."/>
            <person name="Kelso J."/>
            <person name="Kitamura H."/>
            <person name="Kitano H."/>
            <person name="Kollias G."/>
            <person name="Krishnan S.P."/>
            <person name="Kruger A."/>
            <person name="Kummerfeld S.K."/>
            <person name="Kurochkin I.V."/>
            <person name="Lareau L.F."/>
            <person name="Lazarevic D."/>
            <person name="Lipovich L."/>
            <person name="Liu J."/>
            <person name="Liuni S."/>
            <person name="McWilliam S."/>
            <person name="Madan Babu M."/>
            <person name="Madera M."/>
            <person name="Marchionni L."/>
            <person name="Matsuda H."/>
            <person name="Matsuzawa S."/>
            <person name="Miki H."/>
            <person name="Mignone F."/>
            <person name="Miyake S."/>
            <person name="Morris K."/>
            <person name="Mottagui-Tabar S."/>
            <person name="Mulder N."/>
            <person name="Nakano N."/>
            <person name="Nakauchi H."/>
            <person name="Ng P."/>
            <person name="Nilsson R."/>
            <person name="Nishiguchi S."/>
            <person name="Nishikawa S."/>
            <person name="Nori F."/>
            <person name="Ohara O."/>
            <person name="Okazaki Y."/>
            <person name="Orlando V."/>
            <person name="Pang K.C."/>
            <person name="Pavan W.J."/>
            <person name="Pavesi G."/>
            <person name="Pesole G."/>
            <person name="Petrovsky N."/>
            <person name="Piazza S."/>
            <person name="Reed J."/>
            <person name="Reid J.F."/>
            <person name="Ring B.Z."/>
            <person name="Ringwald M."/>
            <person name="Rost B."/>
            <person name="Ruan Y."/>
            <person name="Salzberg S.L."/>
            <person name="Sandelin A."/>
            <person name="Schneider C."/>
            <person name="Schoenbach C."/>
            <person name="Sekiguchi K."/>
            <person name="Semple C.A."/>
            <person name="Seno S."/>
            <person name="Sessa L."/>
            <person name="Sheng Y."/>
            <person name="Shibata Y."/>
            <person name="Shimada H."/>
            <person name="Shimada K."/>
            <person name="Silva D."/>
            <person name="Sinclair B."/>
            <person name="Sperling S."/>
            <person name="Stupka E."/>
            <person name="Sugiura K."/>
            <person name="Sultana R."/>
            <person name="Takenaka Y."/>
            <person name="Taki K."/>
            <person name="Tammoja K."/>
            <person name="Tan S.L."/>
            <person name="Tang S."/>
            <person name="Taylor M.S."/>
            <person name="Tegner J."/>
            <person name="Teichmann S.A."/>
            <person name="Ueda H.R."/>
            <person name="van Nimwegen E."/>
            <person name="Verardo R."/>
            <person name="Wei C.L."/>
            <person name="Yagi K."/>
            <person name="Yamanishi H."/>
            <person name="Zabarovsky E."/>
            <person name="Zhu S."/>
            <person name="Zimmer A."/>
            <person name="Hide W."/>
            <person name="Bult C."/>
            <person name="Grimmond S.M."/>
            <person name="Teasdale R.D."/>
            <person name="Liu E.T."/>
            <person name="Brusic V."/>
            <person name="Quackenbush J."/>
            <person name="Wahlestedt C."/>
            <person name="Mattick J.S."/>
            <person name="Hume D.A."/>
            <person name="Kai C."/>
            <person name="Sasaki D."/>
            <person name="Tomaru Y."/>
            <person name="Fukuda S."/>
            <person name="Kanamori-Katayama M."/>
            <person name="Suzuki M."/>
            <person name="Aoki J."/>
            <person name="Arakawa T."/>
            <person name="Iida J."/>
            <person name="Imamura K."/>
            <person name="Itoh M."/>
            <person name="Kato T."/>
            <person name="Kawaji H."/>
            <person name="Kawagashira N."/>
            <person name="Kawashima T."/>
            <person name="Kojima M."/>
            <person name="Kondo S."/>
            <person name="Konno H."/>
            <person name="Nakano K."/>
            <person name="Ninomiya N."/>
            <person name="Nishio T."/>
            <person name="Okada M."/>
            <person name="Plessy C."/>
            <person name="Shibata K."/>
            <person name="Shiraki T."/>
            <person name="Suzuki S."/>
            <person name="Tagami M."/>
            <person name="Waki K."/>
            <person name="Watahiki A."/>
            <person name="Okamura-Oho Y."/>
            <person name="Suzuki H."/>
            <person name="Kawai J."/>
            <person name="Hayashizaki Y."/>
        </authorList>
    </citation>
    <scope>NUCLEOTIDE SEQUENCE [LARGE SCALE MRNA] (ISOFORM 2)</scope>
    <scope>NUCLEOTIDE SEQUENCE [LARGE SCALE MRNA] OF 1-745 (ISOFORM 1)</scope>
    <source>
        <strain>NOD</strain>
    </source>
</reference>
<reference key="2">
    <citation type="journal article" date="2009" name="PLoS Biol.">
        <title>Lineage-specific biology revealed by a finished genome assembly of the mouse.</title>
        <authorList>
            <person name="Church D.M."/>
            <person name="Goodstadt L."/>
            <person name="Hillier L.W."/>
            <person name="Zody M.C."/>
            <person name="Goldstein S."/>
            <person name="She X."/>
            <person name="Bult C.J."/>
            <person name="Agarwala R."/>
            <person name="Cherry J.L."/>
            <person name="DiCuccio M."/>
            <person name="Hlavina W."/>
            <person name="Kapustin Y."/>
            <person name="Meric P."/>
            <person name="Maglott D."/>
            <person name="Birtle Z."/>
            <person name="Marques A.C."/>
            <person name="Graves T."/>
            <person name="Zhou S."/>
            <person name="Teague B."/>
            <person name="Potamousis K."/>
            <person name="Churas C."/>
            <person name="Place M."/>
            <person name="Herschleb J."/>
            <person name="Runnheim R."/>
            <person name="Forrest D."/>
            <person name="Amos-Landgraf J."/>
            <person name="Schwartz D.C."/>
            <person name="Cheng Z."/>
            <person name="Lindblad-Toh K."/>
            <person name="Eichler E.E."/>
            <person name="Ponting C.P."/>
        </authorList>
    </citation>
    <scope>NUCLEOTIDE SEQUENCE [LARGE SCALE GENOMIC DNA]</scope>
    <source>
        <strain>C57BL/6J</strain>
    </source>
</reference>
<reference key="3">
    <citation type="journal article" date="2004" name="Genome Res.">
        <title>The status, quality, and expansion of the NIH full-length cDNA project: the Mammalian Gene Collection (MGC).</title>
        <authorList>
            <consortium name="The MGC Project Team"/>
        </authorList>
    </citation>
    <scope>NUCLEOTIDE SEQUENCE [LARGE SCALE MRNA] OF 1-191 (ISOFORM 1)</scope>
    <scope>NUCLEOTIDE SEQUENCE [LARGE SCALE MRNA] OF 2060-2703 (ISOFORM 3)</scope>
    <source>
        <strain>FVB/N</strain>
        <strain>NMRI</strain>
        <tissue>Mammary tumor</tissue>
    </source>
</reference>
<reference key="4">
    <citation type="submission" date="2009-01" db="UniProtKB">
        <authorList>
            <person name="Lubec G."/>
            <person name="Sunyer B."/>
            <person name="Chen W.-Q."/>
        </authorList>
    </citation>
    <scope>PROTEIN SEQUENCE OF 944-968; 1338-1349 AND 1924-1932</scope>
    <scope>IDENTIFICATION BY MASS SPECTROMETRY</scope>
    <source>
        <strain>OF1</strain>
        <tissue>Hippocampus</tissue>
    </source>
</reference>
<reference key="5">
    <citation type="journal article" date="2003" name="DNA Res.">
        <title>Prediction of the coding sequences of mouse homologues of KIAA gene: II. The complete nucleotide sequences of 400 mouse KIAA-homologous cDNAs identified by screening of terminal sequences of cDNA clones randomly sampled from size-fractionated libraries.</title>
        <authorList>
            <person name="Okazaki N."/>
            <person name="Kikuno R."/>
            <person name="Ohara R."/>
            <person name="Inamoto S."/>
            <person name="Aizawa H."/>
            <person name="Yuasa S."/>
            <person name="Nakajima D."/>
            <person name="Nagase T."/>
            <person name="Ohara O."/>
            <person name="Koga H."/>
        </authorList>
    </citation>
    <scope>NUCLEOTIDE SEQUENCE [LARGE SCALE MRNA] OF 950-2703 (ISOFORMS 1/2)</scope>
    <source>
        <tissue>Brain</tissue>
    </source>
</reference>
<reference key="6">
    <citation type="journal article" date="2004" name="Mol. Cell. Proteomics">
        <title>Phosphoproteomic analysis of the developing mouse brain.</title>
        <authorList>
            <person name="Ballif B.A."/>
            <person name="Villen J."/>
            <person name="Beausoleil S.A."/>
            <person name="Schwartz D."/>
            <person name="Gygi S.P."/>
        </authorList>
    </citation>
    <scope>PHOSPHORYLATION [LARGE SCALE ANALYSIS] AT SER-1343</scope>
    <scope>IDENTIFICATION BY MASS SPECTROMETRY [LARGE SCALE ANALYSIS]</scope>
    <source>
        <tissue>Embryonic brain</tissue>
    </source>
</reference>
<reference key="7">
    <citation type="journal article" date="2007" name="Mol. Cell. Proteomics">
        <title>Qualitative and quantitative analyses of protein phosphorylation in naive and stimulated mouse synaptosomal preparations.</title>
        <authorList>
            <person name="Munton R.P."/>
            <person name="Tweedie-Cullen R."/>
            <person name="Livingstone-Zatchej M."/>
            <person name="Weinandy F."/>
            <person name="Waidelich M."/>
            <person name="Longo D."/>
            <person name="Gehrig P."/>
            <person name="Potthast F."/>
            <person name="Rutishauser D."/>
            <person name="Gerrits B."/>
            <person name="Panse C."/>
            <person name="Schlapbach R."/>
            <person name="Mansuy I.M."/>
        </authorList>
    </citation>
    <scope>IDENTIFICATION BY MASS SPECTROMETRY [LARGE SCALE ANALYSIS]</scope>
    <source>
        <tissue>Brain cortex</tissue>
    </source>
</reference>
<reference key="8">
    <citation type="journal article" date="2007" name="Proc. Natl. Acad. Sci. U.S.A.">
        <title>Large-scale phosphorylation analysis of mouse liver.</title>
        <authorList>
            <person name="Villen J."/>
            <person name="Beausoleil S.A."/>
            <person name="Gerber S.A."/>
            <person name="Gygi S.P."/>
        </authorList>
    </citation>
    <scope>PHOSPHORYLATION [LARGE SCALE ANALYSIS] AT SER-323; SER-349; SER-351; SER-402; SER-406; SER-433; SER-434; SER-435; THR-841; THR-955; SER-1048; SER-1068; SER-1077; SER-1216; SER-1269; SER-1305; SER-1338; SER-1339; SER-1343; SER-1380; SER-1576; SER-1577; SER-2052; SER-2054; THR-2056; SER-2073; SER-2075; SER-2224 AND SER-2404</scope>
    <scope>IDENTIFICATION BY MASS SPECTROMETRY [LARGE SCALE ANALYSIS]</scope>
    <source>
        <tissue>Liver</tissue>
    </source>
</reference>
<reference key="9">
    <citation type="journal article" date="2008" name="J. Proteome Res.">
        <title>Specific phosphopeptide enrichment with immobilized titanium ion affinity chromatography adsorbent for phosphoproteome analysis.</title>
        <authorList>
            <person name="Zhou H."/>
            <person name="Ye M."/>
            <person name="Dong J."/>
            <person name="Han G."/>
            <person name="Jiang X."/>
            <person name="Wu R."/>
            <person name="Zou H."/>
        </authorList>
    </citation>
    <scope>PHOSPHORYLATION [LARGE SCALE ANALYSIS] AT SER-349; SER-351; SER-433; SER-434; SER-435; SER-773; SER-775; SER-778; SER-1216; SER-1305; SER-2052; SER-2054 AND THR-2056</scope>
    <scope>IDENTIFICATION BY MASS SPECTROMETRY [LARGE SCALE ANALYSIS]</scope>
    <source>
        <tissue>Liver</tissue>
    </source>
</reference>
<reference key="10">
    <citation type="journal article" date="2009" name="Immunity">
        <title>The phagosomal proteome in interferon-gamma-activated macrophages.</title>
        <authorList>
            <person name="Trost M."/>
            <person name="English L."/>
            <person name="Lemieux S."/>
            <person name="Courcelles M."/>
            <person name="Desjardins M."/>
            <person name="Thibault P."/>
        </authorList>
    </citation>
    <scope>PHOSPHORYLATION [LARGE SCALE ANALYSIS] AT SER-433; SER-434; SER-435; THR-973; SER-1305; SER-1338; SER-1339; SER-1343; SER-1360; SER-1400; SER-1465; THR-1467; SER-2224; SER-2335; SER-2381 AND SER-2404</scope>
    <scope>IDENTIFICATION BY MASS SPECTROMETRY [LARGE SCALE ANALYSIS]</scope>
</reference>
<reference key="11">
    <citation type="journal article" date="2009" name="Mol. Cell. Proteomics">
        <title>Large scale localization of protein phosphorylation by use of electron capture dissociation mass spectrometry.</title>
        <authorList>
            <person name="Sweet S.M."/>
            <person name="Bailey C.M."/>
            <person name="Cunningham D.L."/>
            <person name="Heath J.K."/>
            <person name="Cooper H.J."/>
        </authorList>
    </citation>
    <scope>PHOSPHORYLATION [LARGE SCALE ANALYSIS] AT SER-433; SER-434; SER-435; SER-531; SER-533; SER-1151; SER-1338; SER-1339; SER-1343; SER-1360; SER-1572; SER-1576; SER-1577; SER-1982; SER-1984; THR-1986; SER-2052; SER-2054; THR-2056; SER-2224; SER-2335; SER-2351; SER-2404; SER-2646; SER-2648; SER-2656 AND SER-2660</scope>
    <scope>IDENTIFICATION BY MASS SPECTROMETRY [LARGE SCALE ANALYSIS]</scope>
    <source>
        <tissue>Embryonic fibroblast</tissue>
    </source>
</reference>
<reference key="12">
    <citation type="journal article" date="2010" name="Cell">
        <title>A tissue-specific atlas of mouse protein phosphorylation and expression.</title>
        <authorList>
            <person name="Huttlin E.L."/>
            <person name="Jedrychowski M.P."/>
            <person name="Elias J.E."/>
            <person name="Goswami T."/>
            <person name="Rad R."/>
            <person name="Beausoleil S.A."/>
            <person name="Villen J."/>
            <person name="Haas W."/>
            <person name="Sowa M.E."/>
            <person name="Gygi S.P."/>
        </authorList>
    </citation>
    <scope>PHOSPHORYLATION [LARGE SCALE ANALYSIS] AT SER-295; SER-310; SER-323; SER-349; SER-351; SER-402; SER-406; SER-422; SER-433; SER-434; SER-435; SER-438; SER-773; SER-778; SER-829; THR-831; THR-841; SER-882; SER-946; SER-949; THR-955; THR-973; SER-984; SER-993; THR-995; SER-1011; SER-1038; THR-1044; SER-1048; SER-1067; SER-1068; THR-1071; SER-1077; SER-1097; SER-1216; SER-1225; SER-1229; SER-1230; SER-1269; SER-1305; SER-1338; SER-1339; SER-1340; SER-1343; SER-1360; SER-1380; SER-1400; THR-1428; SER-1508; SER-1572; SER-1576; SER-1577; SER-1813; SER-2052; SER-2054; THR-2056; SER-2070; SER-2073; SER-2075; SER-2084; SER-2224; SER-2335; SER-2351; SER-2404; SER-2535 AND SER-2656</scope>
    <scope>IDENTIFICATION BY MASS SPECTROMETRY [LARGE SCALE ANALYSIS]</scope>
    <source>
        <tissue>Brain</tissue>
        <tissue>Brown adipose tissue</tissue>
        <tissue>Heart</tissue>
        <tissue>Kidney</tissue>
        <tissue>Liver</tissue>
        <tissue>Lung</tissue>
        <tissue>Pancreas</tissue>
        <tissue>Spleen</tissue>
        <tissue>Testis</tissue>
    </source>
</reference>
<reference key="13">
    <citation type="journal article" date="2013" name="Mol. Cell">
        <title>SIRT5-mediated lysine desuccinylation impacts diverse metabolic pathways.</title>
        <authorList>
            <person name="Park J."/>
            <person name="Chen Y."/>
            <person name="Tishkoff D.X."/>
            <person name="Peng C."/>
            <person name="Tan M."/>
            <person name="Dai L."/>
            <person name="Xie Z."/>
            <person name="Zhang Y."/>
            <person name="Zwaans B.M."/>
            <person name="Skinner M.E."/>
            <person name="Lombard D.B."/>
            <person name="Zhao Y."/>
        </authorList>
    </citation>
    <scope>ACETYLATION [LARGE SCALE ANALYSIS] AT LYS-101</scope>
    <scope>IDENTIFICATION BY MASS SPECTROMETRY [LARGE SCALE ANALYSIS]</scope>
    <source>
        <tissue>Embryonic fibroblast</tissue>
    </source>
</reference>
<reference key="14">
    <citation type="journal article" date="2014" name="Mol. Cell. Proteomics">
        <title>Immunoaffinity enrichment and mass spectrometry analysis of protein methylation.</title>
        <authorList>
            <person name="Guo A."/>
            <person name="Gu H."/>
            <person name="Zhou J."/>
            <person name="Mulhern D."/>
            <person name="Wang Y."/>
            <person name="Lee K.A."/>
            <person name="Yang V."/>
            <person name="Aguiar M."/>
            <person name="Kornhauser J."/>
            <person name="Jia X."/>
            <person name="Ren J."/>
            <person name="Beausoleil S.A."/>
            <person name="Silva J.C."/>
            <person name="Vemulapalli V."/>
            <person name="Bedford M.T."/>
            <person name="Comb M.J."/>
        </authorList>
    </citation>
    <scope>METHYLATION [LARGE SCALE ANALYSIS] AT ARG-2146; ARG-2159; ARG-2295 AND ARG-2337</scope>
    <scope>IDENTIFICATION BY MASS SPECTROMETRY [LARGE SCALE ANALYSIS]</scope>
    <source>
        <tissue>Brain</tissue>
        <tissue>Embryo</tissue>
    </source>
</reference>
<sequence>MYNGIGLPTPRGSGTNGYVQRNLSLVRGRRGERPDYKGEEELRHLEAALVKRPNPDILDHERKRRVELRCLELEEMMEEQGYEEQQIQEKVATFRLMLLEKDVNPGAKEETPGQRPVVTETHQLAELNEKKNERLRAAFGISDSYVDGSSFDPQRRAREAKQIAPEPPKPYSLVRETSSSRSPTPKQKKKKKKKDRGRRSESSSPRRERKKSSKKKKHRSESESKKRKHRSPTPKSKRKSKDKKRKRSRSTTPAPKSRRAHRSTSADSASSSDTSRSRSRSAAAKIHTTALTGQSPPLASGHQGEGDAPSVEPGATNIQQPSSPAPSTKQSSSPYEDKDKKEKSAVRPSPSPERSSTGPELPAPTPLLVEQHVDSPRPLAAIPSSQEPVNPSSEASPTRGCSPPKSPEKPPQSTSSESCPPSPQPTKGSRHASSSPESLKPTPAPGSRREISSSPTSKNRSHGRAKRDKSHSHTPSHRAGRSRSPATKRGRSRSRTPTKRGHSRSRSPQWRRSRSAQRWGKSRSPQRRGRSRSPQRPGWSRSRNTQRRGRSRSARRGRSHSRSPATRGRSRSRTPARRGRSRSRTPARRRSRSRTPARRRSRSRTPARRGRSRSRTPARRRSRTRSPVRRRSRSRSQARRSGRSRSRTPARRSGRSRSRTPARRGRSRSRTPARRSARSRSRTPARRGRSRSRTPARRRSRSRSLVRRGRSHSRTPQRRGRSGSSSERKNKSRTSQRRSRSNSSPEMKKSHVSSRRSRSLSSPRSKAKSLRRSLSGSSPCPKQKSQTPTRRSRSGSSPPKQKSKTPPRQSRSNSPQPKVKSGTPPRPGSVTNMQADECTATPQRQSHSESSPDGEVKSRTPSRQSCSGSSPRVKSSTPPRQSPSRSSSPQPKVKTVISPRGRSHSSSSSPSPSRVTSRTPQRKSRSISPCPKVDSRLRHSRSRSSSPDSKMELGTPLRHSGSTSPYLKSMLQTPPDQNLSGSKSPCPQKSRDSPTGSSGSFHLCPGVTPSSIVPGESCFSASFVQQKGHTQTWPDTSSPEVMQTQVESPLLQSKSQTSPKGSLSRSSSPVTELTARSPVKQDKSEISTDPKLKSGMSPEQSKTKPDSSIYPLVDSKSFLVQSRLEPSELKERLGLIQEDVASSCIPRDKFSPTQDRPESSTVLKVTPRVLLKERSGAGSPPGKRDQKSLLPNSSQDELMEVEKSEQPLSQVLPSLSPEHKEMPGSNIESSPEVEERPAVLSALDQSQSQPSKAAETPAVASCWSGPQVSPEHKELSHSPPRENSFESSLEFKNSGPVSEVNTGFSPEVKEELNGSFLNQTEADPSVDMKEQSRSSRRSSSELSPEVVEKVGLFSSQKVSSPVLETVQQRTPSRERSSSASPELKDGLPRTPSRRSRSGSSPGLRDGSGTPSRHSLSGSSPGMKDTPQTPSRGRSECDSSPEPKALPQTPRARSHSPSSPERNNKSVTPQRERSGSESSVEQKNLARTSPGQRSRSGSSQELDGKPSASPQERSESDSSPDSKPKTRTPLRQRSHSGSSPEVDSKSRHSPRLSRSGSSPEMKDKPRVLQRAQSGTDSSPEHKIPAPRALPRHSRSGSSSKERGPSPEGSSSSESSPEHAPKSRTARRGSRSSIEPKTKSHTPPRRRSSRSSPELTRKARVSRRSRSASSSPEIRSRTPPRRRRSPSVSSPEPTEKSRSSRRRRSVSSPRTKTTSRRGRSPSPKPRGLQRSRSRSRREKTRTTRRRDRSGSSQSTSRRRQRSRSRSRVTRRRRGGSGYHSRSPTRQESSRTSSRRRRGRSRTPLTSRKRSRSRTSPAPWKRSRSRASPATHRRSRSRTPLISRRRSRSRTSPVSRRRSRSVNRRRSRSRASPVSRRRSRSRTPPVTRRRSRSRTPTRRRSRSRTPPVTRRRSRSRTPPVTRRRSRSRTSPVTRRRSRSRTSPVTRRRSRSRTSPVTRRRSRSRTSPVTRRRSRSRTPPAIRRRSRSRTPLLPRKRSRSRSPLAIRRRSRSRTPRAARGKRSLTRSPPAIRRRSASGSSSDRSRSATPPATRNHSGSRTPPVALSSSRMSCFSRPSMSPTPLDRCRSPGMLEPLGSARTPMSVLQQTGGSMMDGPGPRIPDHPRSSVPENHAQSRIALALTAISLGTARPPPSMSAAGLAARMSQVPAPVPLMSLRTAPAANLASRIPAASAAAMNLASARTSAIPASVNLADSRTPAAAAAMNLASPRTAVAPSAVNLADPRTPAASAVNLAGARTPAALAALSLTGSGTPPTAANYPSSSRTPQAPTPANLVVGPRSAHGTAPVNIAGSRTPAGLAPTNLSSSRMAPALSGANLTSPRVPLSAYDRVSGRTSPLMLDRARSRTPPSAPSQSRMTSERERAPSPASRMVQASSQSLLPPAQDRPRSPVPSAFSDQSRSVVQTTPVAGSQSLSSGTVAKSTSSASDHNGMLSGPAPGISHAEGGEPPASTGAQQPSTLAALQPAKERRSSSSSSSSSSSSSSSSSSSSSSSSSGSSSSDSEGSSLPAQPEVALKRVPSPTPVPKEAIREGRPQEPTPAKRKRRSSSSSSSSSSSSSSSSSSSSSSSSSSSSSSSSSSSSSSSSSSPSPAKPGPQALPKPASPKKPPPGERRSRSPRKPIDSLRDSRSLSYSPVERRQPSPQPSPRDLQSSERVSWRGQRGDSHSPGHKRKETPSPRSNRHRSSRSP</sequence>
<evidence type="ECO:0000250" key="1"/>
<evidence type="ECO:0000250" key="2">
    <source>
        <dbReference type="UniProtKB" id="Q9UQ35"/>
    </source>
</evidence>
<evidence type="ECO:0000255" key="3"/>
<evidence type="ECO:0000256" key="4">
    <source>
        <dbReference type="SAM" id="MobiDB-lite"/>
    </source>
</evidence>
<evidence type="ECO:0000303" key="5">
    <source>
    </source>
</evidence>
<evidence type="ECO:0000303" key="6">
    <source>
    </source>
</evidence>
<evidence type="ECO:0000305" key="7"/>
<evidence type="ECO:0007744" key="8">
    <source>
    </source>
</evidence>
<evidence type="ECO:0007744" key="9">
    <source>
    </source>
</evidence>
<evidence type="ECO:0007744" key="10">
    <source>
    </source>
</evidence>
<evidence type="ECO:0007744" key="11">
    <source>
    </source>
</evidence>
<evidence type="ECO:0007744" key="12">
    <source>
    </source>
</evidence>
<evidence type="ECO:0007744" key="13">
    <source>
    </source>
</evidence>
<evidence type="ECO:0007744" key="14">
    <source>
    </source>
</evidence>
<evidence type="ECO:0007744" key="15">
    <source>
    </source>
</evidence>